<comment type="function">
    <text evidence="1">Peptide chain release factor 2 directs the termination of translation in response to the peptide chain termination codons UGA and UAA.</text>
</comment>
<comment type="subcellular location">
    <subcellularLocation>
        <location evidence="1">Cytoplasm</location>
    </subcellularLocation>
</comment>
<comment type="PTM">
    <text evidence="1">Methylated by PrmC. Methylation increases the termination efficiency of RF2.</text>
</comment>
<comment type="similarity">
    <text evidence="1">Belongs to the prokaryotic/mitochondrial release factor family.</text>
</comment>
<protein>
    <recommendedName>
        <fullName evidence="1">Peptide chain release factor 2</fullName>
        <shortName evidence="1">RF-2</shortName>
    </recommendedName>
</protein>
<feature type="chain" id="PRO_1000117264" description="Peptide chain release factor 2">
    <location>
        <begin position="1"/>
        <end position="369"/>
    </location>
</feature>
<feature type="modified residue" description="N5-methylglutamine" evidence="1">
    <location>
        <position position="249"/>
    </location>
</feature>
<reference key="1">
    <citation type="journal article" date="2009" name="J. Bacteriol.">
        <title>The genome of Thermosipho africanus TCF52B: lateral genetic connections to the Firmicutes and Archaea.</title>
        <authorList>
            <person name="Nesboe C.L."/>
            <person name="Bapteste E."/>
            <person name="Curtis B."/>
            <person name="Dahle H."/>
            <person name="Lopez P."/>
            <person name="Macleod D."/>
            <person name="Dlutek M."/>
            <person name="Bowman S."/>
            <person name="Zhaxybayeva O."/>
            <person name="Birkeland N.-K."/>
            <person name="Doolittle W.F."/>
        </authorList>
    </citation>
    <scope>NUCLEOTIDE SEQUENCE [LARGE SCALE GENOMIC DNA]</scope>
    <source>
        <strain>TCF52B</strain>
    </source>
</reference>
<name>RF2_THEAB</name>
<gene>
    <name evidence="1" type="primary">prfB</name>
    <name type="ordered locus">THA_1882</name>
</gene>
<keyword id="KW-0963">Cytoplasm</keyword>
<keyword id="KW-0488">Methylation</keyword>
<keyword id="KW-0648">Protein biosynthesis</keyword>
<keyword id="KW-1185">Reference proteome</keyword>
<proteinExistence type="inferred from homology"/>
<accession>B7IE81</accession>
<sequence length="369" mass="42845">MIDFELKQKIDEAKKKFEDIIKVFHPENKRKELEELEKQMGDSDFWSDQRKAREISQKAQRIRKIIDDMKDIEAKFEDLDAAIELSDEDQSFVETIKEMVEEIEKKVKTFELELILNGKFDASNAYLTIHPGAGGTESQDWASMLLRMYMRWAERKGFDVQIVDYQPGEEAGIKSAMIYIKGDYAYGYLKYERGVHRLVRISPFDANKRRHTSFASVNVIPEIDDDIDIEINPEDLRIDTYRASGAGGQYVNKTESAVRITHIPTGIVVTCQTERSQLQNKETALKVLKARLYQLELEKRQKQLEEIQGELKDISWGNQIRSYVFQPYTMVKDHRTNVETGNIDAVMDGEIDIFIESELIHFAGIRNKQ</sequence>
<dbReference type="EMBL" id="CP001185">
    <property type="protein sequence ID" value="ACJ76308.1"/>
    <property type="molecule type" value="Genomic_DNA"/>
</dbReference>
<dbReference type="RefSeq" id="WP_004102881.1">
    <property type="nucleotide sequence ID" value="NC_011653.1"/>
</dbReference>
<dbReference type="SMR" id="B7IE81"/>
<dbReference type="STRING" id="484019.THA_1882"/>
<dbReference type="KEGG" id="taf:THA_1882"/>
<dbReference type="eggNOG" id="COG1186">
    <property type="taxonomic scope" value="Bacteria"/>
</dbReference>
<dbReference type="HOGENOM" id="CLU_036856_6_0_0"/>
<dbReference type="OrthoDB" id="9806673at2"/>
<dbReference type="Proteomes" id="UP000002453">
    <property type="component" value="Chromosome"/>
</dbReference>
<dbReference type="GO" id="GO:0005737">
    <property type="term" value="C:cytoplasm"/>
    <property type="evidence" value="ECO:0007669"/>
    <property type="project" value="UniProtKB-SubCell"/>
</dbReference>
<dbReference type="GO" id="GO:0016149">
    <property type="term" value="F:translation release factor activity, codon specific"/>
    <property type="evidence" value="ECO:0007669"/>
    <property type="project" value="UniProtKB-UniRule"/>
</dbReference>
<dbReference type="FunFam" id="3.30.160.20:FF:000010">
    <property type="entry name" value="Peptide chain release factor 2"/>
    <property type="match status" value="1"/>
</dbReference>
<dbReference type="Gene3D" id="3.30.160.20">
    <property type="match status" value="1"/>
</dbReference>
<dbReference type="Gene3D" id="3.30.70.1660">
    <property type="match status" value="1"/>
</dbReference>
<dbReference type="Gene3D" id="1.20.58.410">
    <property type="entry name" value="Release factor"/>
    <property type="match status" value="1"/>
</dbReference>
<dbReference type="HAMAP" id="MF_00094">
    <property type="entry name" value="Rel_fac_2"/>
    <property type="match status" value="1"/>
</dbReference>
<dbReference type="InterPro" id="IPR005139">
    <property type="entry name" value="PCRF"/>
</dbReference>
<dbReference type="InterPro" id="IPR000352">
    <property type="entry name" value="Pep_chain_release_fac_I"/>
</dbReference>
<dbReference type="InterPro" id="IPR045853">
    <property type="entry name" value="Pep_chain_release_fac_I_sf"/>
</dbReference>
<dbReference type="InterPro" id="IPR004374">
    <property type="entry name" value="PrfB"/>
</dbReference>
<dbReference type="NCBIfam" id="TIGR00020">
    <property type="entry name" value="prfB"/>
    <property type="match status" value="1"/>
</dbReference>
<dbReference type="PANTHER" id="PTHR43116:SF3">
    <property type="entry name" value="CLASS I PEPTIDE CHAIN RELEASE FACTOR"/>
    <property type="match status" value="1"/>
</dbReference>
<dbReference type="PANTHER" id="PTHR43116">
    <property type="entry name" value="PEPTIDE CHAIN RELEASE FACTOR 2"/>
    <property type="match status" value="1"/>
</dbReference>
<dbReference type="Pfam" id="PF03462">
    <property type="entry name" value="PCRF"/>
    <property type="match status" value="1"/>
</dbReference>
<dbReference type="Pfam" id="PF00472">
    <property type="entry name" value="RF-1"/>
    <property type="match status" value="1"/>
</dbReference>
<dbReference type="SMART" id="SM00937">
    <property type="entry name" value="PCRF"/>
    <property type="match status" value="1"/>
</dbReference>
<dbReference type="SUPFAM" id="SSF75620">
    <property type="entry name" value="Release factor"/>
    <property type="match status" value="1"/>
</dbReference>
<dbReference type="PROSITE" id="PS00745">
    <property type="entry name" value="RF_PROK_I"/>
    <property type="match status" value="1"/>
</dbReference>
<organism>
    <name type="scientific">Thermosipho africanus (strain TCF52B)</name>
    <dbReference type="NCBI Taxonomy" id="484019"/>
    <lineage>
        <taxon>Bacteria</taxon>
        <taxon>Thermotogati</taxon>
        <taxon>Thermotogota</taxon>
        <taxon>Thermotogae</taxon>
        <taxon>Thermotogales</taxon>
        <taxon>Fervidobacteriaceae</taxon>
        <taxon>Thermosipho</taxon>
    </lineage>
</organism>
<evidence type="ECO:0000255" key="1">
    <source>
        <dbReference type="HAMAP-Rule" id="MF_00094"/>
    </source>
</evidence>